<organism>
    <name type="scientific">Vibrio vulnificus (strain YJ016)</name>
    <dbReference type="NCBI Taxonomy" id="196600"/>
    <lineage>
        <taxon>Bacteria</taxon>
        <taxon>Pseudomonadati</taxon>
        <taxon>Pseudomonadota</taxon>
        <taxon>Gammaproteobacteria</taxon>
        <taxon>Vibrionales</taxon>
        <taxon>Vibrionaceae</taxon>
        <taxon>Vibrio</taxon>
    </lineage>
</organism>
<reference key="1">
    <citation type="journal article" date="2003" name="Genome Res.">
        <title>Comparative genome analysis of Vibrio vulnificus, a marine pathogen.</title>
        <authorList>
            <person name="Chen C.-Y."/>
            <person name="Wu K.-M."/>
            <person name="Chang Y.-C."/>
            <person name="Chang C.-H."/>
            <person name="Tsai H.-C."/>
            <person name="Liao T.-L."/>
            <person name="Liu Y.-M."/>
            <person name="Chen H.-J."/>
            <person name="Shen A.B.-T."/>
            <person name="Li J.-C."/>
            <person name="Su T.-L."/>
            <person name="Shao C.-P."/>
            <person name="Lee C.-T."/>
            <person name="Hor L.-I."/>
            <person name="Tsai S.-F."/>
        </authorList>
    </citation>
    <scope>NUCLEOTIDE SEQUENCE [LARGE SCALE GENOMIC DNA]</scope>
    <source>
        <strain>YJ016</strain>
    </source>
</reference>
<name>DJLA_VIBVY</name>
<keyword id="KW-0997">Cell inner membrane</keyword>
<keyword id="KW-1003">Cell membrane</keyword>
<keyword id="KW-0143">Chaperone</keyword>
<keyword id="KW-0472">Membrane</keyword>
<keyword id="KW-0812">Transmembrane</keyword>
<keyword id="KW-1133">Transmembrane helix</keyword>
<accession>Q7MP82</accession>
<proteinExistence type="inferred from homology"/>
<comment type="function">
    <text evidence="1">Regulatory DnaK co-chaperone. Direct interaction between DnaK and DjlA is needed for the induction of the wcaABCDE operon, involved in the synthesis of a colanic acid polysaccharide capsule, possibly through activation of the RcsB/RcsC phosphotransfer signaling pathway. The colanic acid capsule may help the bacterium survive conditions outside the host.</text>
</comment>
<comment type="subunit">
    <text evidence="1">Homodimer.</text>
</comment>
<comment type="subcellular location">
    <subcellularLocation>
        <location evidence="1">Cell inner membrane</location>
        <topology evidence="1">Single-pass type III membrane protein</topology>
    </subcellularLocation>
</comment>
<comment type="domain">
    <text evidence="1">The transmembrane domain is a dimerization domain.</text>
</comment>
<sequence>MQIFGKILGAFFGFLFGGVFGALFGLFIGHQFDKARRLSQAGFKTAGFGQGPSQAQRQEEFFKSAFAVMGHVAKAKGQVTKEEIQLASAMMDRMSLHGEQRRAAQDAFREGKERDFPLEQLLERVKIATSGRFDLLQFFLELQISAAFADGDVHPSERNVLHKIARGLGFSSEQLERRLQMQEAAFRFQRQGGFGGQQHQSHHSSSHGGWQQASQTDRLADAYKILGIDANADGKEVKRAYRKLMNEHHPDKLMAKGLPPEMMNMAKEKSQEIQSAYDLIKKEKGFK</sequence>
<gene>
    <name evidence="1" type="primary">djlA</name>
    <name type="ordered locus">VV0482</name>
</gene>
<dbReference type="EMBL" id="BA000037">
    <property type="protein sequence ID" value="BAC93246.1"/>
    <property type="molecule type" value="Genomic_DNA"/>
</dbReference>
<dbReference type="RefSeq" id="WP_011149400.1">
    <property type="nucleotide sequence ID" value="NC_005139.1"/>
</dbReference>
<dbReference type="SMR" id="Q7MP82"/>
<dbReference type="STRING" id="672.VV93_v1c04490"/>
<dbReference type="KEGG" id="vvy:VV0482"/>
<dbReference type="PATRIC" id="fig|196600.6.peg.508"/>
<dbReference type="eggNOG" id="COG1076">
    <property type="taxonomic scope" value="Bacteria"/>
</dbReference>
<dbReference type="HOGENOM" id="CLU_066221_1_0_6"/>
<dbReference type="Proteomes" id="UP000002675">
    <property type="component" value="Chromosome I"/>
</dbReference>
<dbReference type="GO" id="GO:0005886">
    <property type="term" value="C:plasma membrane"/>
    <property type="evidence" value="ECO:0007669"/>
    <property type="project" value="UniProtKB-SubCell"/>
</dbReference>
<dbReference type="GO" id="GO:0051087">
    <property type="term" value="F:protein-folding chaperone binding"/>
    <property type="evidence" value="ECO:0007669"/>
    <property type="project" value="InterPro"/>
</dbReference>
<dbReference type="CDD" id="cd06257">
    <property type="entry name" value="DnaJ"/>
    <property type="match status" value="1"/>
</dbReference>
<dbReference type="CDD" id="cd07316">
    <property type="entry name" value="terB_like_DjlA"/>
    <property type="match status" value="1"/>
</dbReference>
<dbReference type="FunFam" id="1.10.287.110:FF:000011">
    <property type="entry name" value="Co-chaperone protein DjlA"/>
    <property type="match status" value="1"/>
</dbReference>
<dbReference type="Gene3D" id="1.10.287.110">
    <property type="entry name" value="DnaJ domain"/>
    <property type="match status" value="1"/>
</dbReference>
<dbReference type="Gene3D" id="1.10.3680.10">
    <property type="entry name" value="TerB-like"/>
    <property type="match status" value="1"/>
</dbReference>
<dbReference type="HAMAP" id="MF_01153">
    <property type="entry name" value="DjlA"/>
    <property type="match status" value="1"/>
</dbReference>
<dbReference type="InterPro" id="IPR023749">
    <property type="entry name" value="DjlA"/>
</dbReference>
<dbReference type="InterPro" id="IPR050817">
    <property type="entry name" value="DjlA_DnaK_co-chaperone"/>
</dbReference>
<dbReference type="InterPro" id="IPR007791">
    <property type="entry name" value="DjlA_N"/>
</dbReference>
<dbReference type="InterPro" id="IPR001623">
    <property type="entry name" value="DnaJ_domain"/>
</dbReference>
<dbReference type="InterPro" id="IPR036869">
    <property type="entry name" value="J_dom_sf"/>
</dbReference>
<dbReference type="InterPro" id="IPR029024">
    <property type="entry name" value="TerB-like"/>
</dbReference>
<dbReference type="NCBIfam" id="NF006948">
    <property type="entry name" value="PRK09430.1"/>
    <property type="match status" value="1"/>
</dbReference>
<dbReference type="PANTHER" id="PTHR24074">
    <property type="entry name" value="CO-CHAPERONE PROTEIN DJLA"/>
    <property type="match status" value="1"/>
</dbReference>
<dbReference type="Pfam" id="PF00226">
    <property type="entry name" value="DnaJ"/>
    <property type="match status" value="1"/>
</dbReference>
<dbReference type="Pfam" id="PF05099">
    <property type="entry name" value="TerB"/>
    <property type="match status" value="1"/>
</dbReference>
<dbReference type="PRINTS" id="PR00625">
    <property type="entry name" value="JDOMAIN"/>
</dbReference>
<dbReference type="SMART" id="SM00271">
    <property type="entry name" value="DnaJ"/>
    <property type="match status" value="1"/>
</dbReference>
<dbReference type="SUPFAM" id="SSF46565">
    <property type="entry name" value="Chaperone J-domain"/>
    <property type="match status" value="1"/>
</dbReference>
<dbReference type="SUPFAM" id="SSF158682">
    <property type="entry name" value="TerB-like"/>
    <property type="match status" value="1"/>
</dbReference>
<dbReference type="PROSITE" id="PS50076">
    <property type="entry name" value="DNAJ_2"/>
    <property type="match status" value="1"/>
</dbReference>
<feature type="chain" id="PRO_0000209444" description="Co-chaperone protein DjlA">
    <location>
        <begin position="1"/>
        <end position="287"/>
    </location>
</feature>
<feature type="topological domain" description="Periplasmic" evidence="1">
    <location>
        <begin position="1"/>
        <end position="6"/>
    </location>
</feature>
<feature type="transmembrane region" description="Helical" evidence="1">
    <location>
        <begin position="7"/>
        <end position="30"/>
    </location>
</feature>
<feature type="topological domain" description="Cytoplasmic" evidence="1">
    <location>
        <begin position="31"/>
        <end position="287"/>
    </location>
</feature>
<feature type="domain" description="J" evidence="1">
    <location>
        <begin position="221"/>
        <end position="287"/>
    </location>
</feature>
<feature type="region of interest" description="Disordered" evidence="2">
    <location>
        <begin position="192"/>
        <end position="213"/>
    </location>
</feature>
<protein>
    <recommendedName>
        <fullName evidence="1">Co-chaperone protein DjlA</fullName>
    </recommendedName>
</protein>
<evidence type="ECO:0000255" key="1">
    <source>
        <dbReference type="HAMAP-Rule" id="MF_01153"/>
    </source>
</evidence>
<evidence type="ECO:0000256" key="2">
    <source>
        <dbReference type="SAM" id="MobiDB-lite"/>
    </source>
</evidence>